<gene>
    <name evidence="8" type="primary">wbl</name>
    <name type="synonym">wind</name>
    <name evidence="8" type="ORF">CG7225</name>
</gene>
<dbReference type="EMBL" id="AF025408">
    <property type="protein sequence ID" value="AAC02944.1"/>
    <property type="molecule type" value="Genomic_DNA"/>
</dbReference>
<dbReference type="EMBL" id="AE013599">
    <property type="protein sequence ID" value="AAF57590.1"/>
    <property type="molecule type" value="Genomic_DNA"/>
</dbReference>
<dbReference type="EMBL" id="BT023269">
    <property type="protein sequence ID" value="AAY55685.1"/>
    <property type="molecule type" value="mRNA"/>
</dbReference>
<dbReference type="RefSeq" id="NP_001286609.1">
    <property type="nucleotide sequence ID" value="NM_001299680.1"/>
</dbReference>
<dbReference type="RefSeq" id="NP_725867.1">
    <property type="nucleotide sequence ID" value="NM_166339.2"/>
</dbReference>
<dbReference type="PDB" id="1OVN">
    <property type="method" value="X-ray"/>
    <property type="resolution" value="1.90 A"/>
    <property type="chains" value="A/B=22-257"/>
</dbReference>
<dbReference type="PDB" id="2C0E">
    <property type="method" value="X-ray"/>
    <property type="resolution" value="2.35 A"/>
    <property type="chains" value="A/B=23-257"/>
</dbReference>
<dbReference type="PDB" id="2C0F">
    <property type="method" value="X-ray"/>
    <property type="resolution" value="2.28 A"/>
    <property type="chains" value="A/B=22-257"/>
</dbReference>
<dbReference type="PDB" id="2C0G">
    <property type="method" value="X-ray"/>
    <property type="resolution" value="1.75 A"/>
    <property type="chains" value="A/B=22-257"/>
</dbReference>
<dbReference type="PDB" id="2C1Y">
    <property type="method" value="X-ray"/>
    <property type="resolution" value="2.25 A"/>
    <property type="chains" value="A/B=22-257"/>
</dbReference>
<dbReference type="PDBsum" id="1OVN"/>
<dbReference type="PDBsum" id="2C0E"/>
<dbReference type="PDBsum" id="2C0F"/>
<dbReference type="PDBsum" id="2C0G"/>
<dbReference type="PDBsum" id="2C1Y"/>
<dbReference type="SMR" id="O44342"/>
<dbReference type="BioGRID" id="62871">
    <property type="interactions" value="10"/>
</dbReference>
<dbReference type="FunCoup" id="O44342">
    <property type="interactions" value="651"/>
</dbReference>
<dbReference type="IntAct" id="O44342">
    <property type="interactions" value="10"/>
</dbReference>
<dbReference type="STRING" id="7227.FBpp0309412"/>
<dbReference type="PaxDb" id="7227-FBpp0085698"/>
<dbReference type="DNASU" id="37206"/>
<dbReference type="EnsemblMetazoa" id="FBtr0086510">
    <property type="protein sequence ID" value="FBpp0085698"/>
    <property type="gene ID" value="FBgn0004003"/>
</dbReference>
<dbReference type="EnsemblMetazoa" id="FBtr0340470">
    <property type="protein sequence ID" value="FBpp0309412"/>
    <property type="gene ID" value="FBgn0004003"/>
</dbReference>
<dbReference type="GeneID" id="37206"/>
<dbReference type="KEGG" id="dme:Dmel_CG7225"/>
<dbReference type="UCSC" id="CG7225-RA">
    <property type="organism name" value="d. melanogaster"/>
</dbReference>
<dbReference type="AGR" id="FB:FBgn0004003"/>
<dbReference type="CTD" id="37206"/>
<dbReference type="FlyBase" id="FBgn0004003">
    <property type="gene designation" value="wbl"/>
</dbReference>
<dbReference type="VEuPathDB" id="VectorBase:FBgn0004003"/>
<dbReference type="eggNOG" id="ENOG502QSHC">
    <property type="taxonomic scope" value="Eukaryota"/>
</dbReference>
<dbReference type="GeneTree" id="ENSGT00390000018566"/>
<dbReference type="HOGENOM" id="CLU_061309_0_0_1"/>
<dbReference type="InParanoid" id="O44342"/>
<dbReference type="OMA" id="FPYGDKH"/>
<dbReference type="OrthoDB" id="417262at2759"/>
<dbReference type="PhylomeDB" id="O44342"/>
<dbReference type="BioGRID-ORCS" id="37206">
    <property type="hits" value="0 hits in 1 CRISPR screen"/>
</dbReference>
<dbReference type="EvolutionaryTrace" id="O44342"/>
<dbReference type="GenomeRNAi" id="37206"/>
<dbReference type="PRO" id="PR:O44342"/>
<dbReference type="Proteomes" id="UP000000803">
    <property type="component" value="Chromosome 2R"/>
</dbReference>
<dbReference type="Bgee" id="FBgn0004003">
    <property type="expression patterns" value="Expressed in spermatid in male reproductive gland and 50 other cell types or tissues"/>
</dbReference>
<dbReference type="ExpressionAtlas" id="O44342">
    <property type="expression patterns" value="baseline and differential"/>
</dbReference>
<dbReference type="GO" id="GO:0012505">
    <property type="term" value="C:endomembrane system"/>
    <property type="evidence" value="ECO:0007005"/>
    <property type="project" value="FlyBase"/>
</dbReference>
<dbReference type="GO" id="GO:0005783">
    <property type="term" value="C:endoplasmic reticulum"/>
    <property type="evidence" value="ECO:0000314"/>
    <property type="project" value="UniProtKB"/>
</dbReference>
<dbReference type="GO" id="GO:0005788">
    <property type="term" value="C:endoplasmic reticulum lumen"/>
    <property type="evidence" value="ECO:0007669"/>
    <property type="project" value="UniProtKB-SubCell"/>
</dbReference>
<dbReference type="GO" id="GO:0042803">
    <property type="term" value="F:protein homodimerization activity"/>
    <property type="evidence" value="ECO:0000353"/>
    <property type="project" value="UniProtKB"/>
</dbReference>
<dbReference type="GO" id="GO:0009950">
    <property type="term" value="P:dorsal/ventral axis specification"/>
    <property type="evidence" value="ECO:0000315"/>
    <property type="project" value="UniProtKB"/>
</dbReference>
<dbReference type="GO" id="GO:0009792">
    <property type="term" value="P:embryo development ending in birth or egg hatching"/>
    <property type="evidence" value="ECO:0000304"/>
    <property type="project" value="FlyBase"/>
</dbReference>
<dbReference type="GO" id="GO:0007313">
    <property type="term" value="P:maternal specification of dorsal/ventral axis, oocyte, soma encoded"/>
    <property type="evidence" value="ECO:0000304"/>
    <property type="project" value="FlyBase"/>
</dbReference>
<dbReference type="GO" id="GO:0034975">
    <property type="term" value="P:protein folding in endoplasmic reticulum"/>
    <property type="evidence" value="ECO:0000316"/>
    <property type="project" value="FlyBase"/>
</dbReference>
<dbReference type="GO" id="GO:0009306">
    <property type="term" value="P:protein secretion"/>
    <property type="evidence" value="ECO:0007669"/>
    <property type="project" value="InterPro"/>
</dbReference>
<dbReference type="GO" id="GO:0040014">
    <property type="term" value="P:regulation of multicellular organism growth"/>
    <property type="evidence" value="ECO:0000315"/>
    <property type="project" value="FlyBase"/>
</dbReference>
<dbReference type="CDD" id="cd00238">
    <property type="entry name" value="ERp29c"/>
    <property type="match status" value="1"/>
</dbReference>
<dbReference type="CDD" id="cd03007">
    <property type="entry name" value="PDI_a_ERp29_N"/>
    <property type="match status" value="1"/>
</dbReference>
<dbReference type="FunFam" id="1.20.1150.12:FF:000004">
    <property type="entry name" value="Protein windbeutel"/>
    <property type="match status" value="1"/>
</dbReference>
<dbReference type="FunFam" id="3.40.30.10:FF:000536">
    <property type="entry name" value="Protein windbeutel"/>
    <property type="match status" value="1"/>
</dbReference>
<dbReference type="Gene3D" id="1.20.1150.12">
    <property type="entry name" value="Endoplasmic reticulum resident protein 29, C-terminal domain"/>
    <property type="match status" value="1"/>
</dbReference>
<dbReference type="Gene3D" id="3.40.30.10">
    <property type="entry name" value="Glutaredoxin"/>
    <property type="match status" value="1"/>
</dbReference>
<dbReference type="InterPro" id="IPR016855">
    <property type="entry name" value="ERp29"/>
</dbReference>
<dbReference type="InterPro" id="IPR011679">
    <property type="entry name" value="ERp29_C"/>
</dbReference>
<dbReference type="InterPro" id="IPR036356">
    <property type="entry name" value="ERp29_C_sf"/>
</dbReference>
<dbReference type="InterPro" id="IPR012883">
    <property type="entry name" value="ERp29_N"/>
</dbReference>
<dbReference type="InterPro" id="IPR036249">
    <property type="entry name" value="Thioredoxin-like_sf"/>
</dbReference>
<dbReference type="PANTHER" id="PTHR12211">
    <property type="entry name" value="ENDOPLASMIC RETICULUM PROTEIN ERP29"/>
    <property type="match status" value="1"/>
</dbReference>
<dbReference type="PANTHER" id="PTHR12211:SF0">
    <property type="entry name" value="ENDOPLASMIC RETICULUM RESIDENT PROTEIN 29"/>
    <property type="match status" value="1"/>
</dbReference>
<dbReference type="Pfam" id="PF07749">
    <property type="entry name" value="ERp29"/>
    <property type="match status" value="1"/>
</dbReference>
<dbReference type="Pfam" id="PF07912">
    <property type="entry name" value="ERp29_N"/>
    <property type="match status" value="1"/>
</dbReference>
<dbReference type="PIRSF" id="PIRSF027352">
    <property type="entry name" value="ER_p29"/>
    <property type="match status" value="1"/>
</dbReference>
<dbReference type="SUPFAM" id="SSF47933">
    <property type="entry name" value="ERP29 C domain-like"/>
    <property type="match status" value="1"/>
</dbReference>
<dbReference type="SUPFAM" id="SSF52833">
    <property type="entry name" value="Thioredoxin-like"/>
    <property type="match status" value="1"/>
</dbReference>
<dbReference type="PROSITE" id="PS00014">
    <property type="entry name" value="ER_TARGET"/>
    <property type="match status" value="1"/>
</dbReference>
<proteinExistence type="evidence at protein level"/>
<comment type="function">
    <text evidence="3 7">Probable chaperone protein involved in dorsoventral axis patterning in early embryos (PubMed:9568717). Probably acts by folding and targeting pipe (pip) into the Golgi (PubMed:11076773).</text>
</comment>
<comment type="subunit">
    <text evidence="4 5">Homodimer (PubMed:12941941). Interacts with pip; the interaction is direct and does not require pip to be folded (PubMed:15252019).</text>
</comment>
<comment type="subcellular location">
    <subcellularLocation>
        <location evidence="2">Endoplasmic reticulum lumen</location>
    </subcellularLocation>
</comment>
<comment type="tissue specificity">
    <text evidence="6">Briefly expressed in the follicle cells of the ovary, at around the time when the dorsoventral axis of the egg chamber is first established.</text>
</comment>
<comment type="developmental stage">
    <text evidence="6">Expressed in ovaries, early embryo (0-4 hours) and adult males. Almost undetectable in female carcasses. In ovaries, it is not detected in the germarium or early stage egg-chambers and is first detectable in the follicle cells of stage 8 egg-chambers. The peak of expression occurs in the follicle cells of stages 9 and early 10, and it disappears completely before stage 11. Not expressed in the germline cells (nurse cells and oocyte), with the possible exception of late stage 10 nurse cells.</text>
</comment>
<comment type="domain">
    <text>The CXXC motif was initially thought to constitute the active site of a potential protein disulfide isomerase activity. However, such motif is not essential, suggesting that it has no disulfide isomerase activity. Its precise role remains unclear.</text>
</comment>
<comment type="miscellaneous">
    <text>'Windbeutel' means 'profiteroles' in German.</text>
</comment>
<feature type="signal peptide" evidence="1">
    <location>
        <begin position="1"/>
        <end position="21"/>
    </location>
</feature>
<feature type="chain" id="PRO_0000022690" description="Protein windbeutel">
    <location>
        <begin position="22"/>
        <end position="257"/>
    </location>
</feature>
<feature type="region of interest" description="CXXC motif">
    <location>
        <begin position="24"/>
        <end position="27"/>
    </location>
</feature>
<feature type="short sequence motif" description="Prevents secretion from ER" evidence="2">
    <location>
        <begin position="254"/>
        <end position="257"/>
    </location>
</feature>
<feature type="mutagenesis site" description="Affects subcellular targeting of pip." evidence="4">
    <original>CTGC</original>
    <variation>STGS</variation>
    <location>
        <begin position="24"/>
        <end position="27"/>
    </location>
</feature>
<feature type="mutagenesis site" description="Does not affect subcellular targeting of pip." evidence="5">
    <original>T</original>
    <variation>K</variation>
    <location>
        <position position="25"/>
    </location>
</feature>
<feature type="mutagenesis site" description="Abolishes homodimerization and subcellular targeting of pip." evidence="5">
    <original>V</original>
    <variation>D</variation>
    <variation>N</variation>
    <location>
        <position position="28"/>
    </location>
</feature>
<feature type="mutagenesis site" description="Does not affect subcellular targeting of pip." evidence="5">
    <original>D</original>
    <variation>N</variation>
    <location>
        <position position="29"/>
    </location>
</feature>
<feature type="mutagenesis site" description="Impairs homodimerization. Abolishes homodimerization and subcellular targeting of pip; when associated with S-41." evidence="4">
    <original>D</original>
    <variation>N</variation>
    <location>
        <position position="31"/>
    </location>
</feature>
<feature type="mutagenesis site" description="Does not affect homodimerization. Abolishes homodimerization and subcellular targeting of pip; when associated with N-31." evidence="5">
    <original>R</original>
    <variation>S</variation>
    <location>
        <position position="41"/>
    </location>
</feature>
<feature type="mutagenesis site" description="Affects subcellular targeting of pip but not homodimerization." evidence="5">
    <original>D</original>
    <variation>A</variation>
    <variation>S</variation>
    <location>
        <position position="50"/>
    </location>
</feature>
<feature type="mutagenesis site" description="Affects subcellular targeting of pip but not homodimerization." evidence="5">
    <original>D</original>
    <variation>A</variation>
    <location>
        <position position="50"/>
    </location>
</feature>
<feature type="mutagenesis site" description="Does not affect subcellular targeting of pip." evidence="5">
    <original>I</original>
    <variation>R</variation>
    <variation>S</variation>
    <location>
        <position position="51"/>
    </location>
</feature>
<feature type="mutagenesis site" description="Does not affect subcellular targeting of pip." evidence="5">
    <original>A</original>
    <variation>S</variation>
    <location>
        <position position="52"/>
    </location>
</feature>
<feature type="mutagenesis site" description="Affects subcellular targeting of pip." evidence="5">
    <original>Y</original>
    <variation>S</variation>
    <location>
        <position position="53"/>
    </location>
</feature>
<feature type="mutagenesis site" description="Affects subcellular targeting of pip but not homodimerization. Increases pip binding affinity." evidence="4">
    <original>Y</original>
    <variation>K</variation>
    <location>
        <position position="55"/>
    </location>
</feature>
<feature type="mutagenesis site" description="Does not affect subcellular targeting of pip." evidence="5">
    <original>K</original>
    <variation>S</variation>
    <location>
        <position position="58"/>
    </location>
</feature>
<feature type="mutagenesis site" description="Does not affect subcellular targeting of pip." evidence="5">
    <original>H</original>
    <variation>Y</variation>
    <location>
        <position position="59"/>
    </location>
</feature>
<feature type="mutagenesis site" description="Affects subcellular targeting of pip." evidence="5">
    <original>E</original>
    <variation>Q</variation>
    <location>
        <position position="60"/>
    </location>
</feature>
<feature type="mutagenesis site" description="Does not affect subcellular targeting of pip." evidence="5">
    <original>T</original>
    <variation>K</variation>
    <location>
        <position position="63"/>
    </location>
</feature>
<feature type="mutagenesis site" description="Affects subcellular targeting of pip." evidence="5">
    <original>K</original>
    <variation>D</variation>
    <variation>Y</variation>
    <location>
        <position position="84"/>
    </location>
</feature>
<feature type="mutagenesis site" description="Does not affect subcellular targeting of pip." evidence="5">
    <original>K</original>
    <variation>S</variation>
    <variation>N</variation>
    <location>
        <position position="84"/>
    </location>
</feature>
<feature type="mutagenesis site" description="Affects subcellular targeting of pip." evidence="5">
    <original>Y</original>
    <variation>Q</variation>
    <variation>L</variation>
    <location>
        <position position="86"/>
    </location>
</feature>
<feature type="mutagenesis site" description="Does not affect subcellular targeting of pip." evidence="5">
    <original>Y</original>
    <variation>S</variation>
    <variation>F</variation>
    <location>
        <position position="86"/>
    </location>
</feature>
<feature type="mutagenesis site" description="Does not affect subcellular targeting of pip." evidence="5">
    <original>E</original>
    <variation>K</variation>
    <variation>Q</variation>
    <location>
        <position position="88"/>
    </location>
</feature>
<feature type="mutagenesis site" description="Affects subcellular targeting of pip." evidence="5">
    <original>P</original>
    <variation>D</variation>
    <location>
        <position position="106"/>
    </location>
</feature>
<feature type="mutagenesis site" description="Affects subcellular targeting of pip; when associated with S-219." evidence="5">
    <original>E</original>
    <variation>Q</variation>
    <location>
        <position position="212"/>
    </location>
</feature>
<feature type="mutagenesis site" description="Affects subcellular targeting of pip." evidence="5">
    <original>R</original>
    <variation>A</variation>
    <location>
        <position position="215"/>
    </location>
</feature>
<feature type="mutagenesis site" description="Affects subcellular targeting of pip." evidence="5">
    <original>R</original>
    <variation>D</variation>
    <location>
        <position position="218"/>
    </location>
</feature>
<feature type="mutagenesis site" description="Affects subcellular targeting of pip; when associated with Q-212." evidence="5">
    <original>L</original>
    <variation>S</variation>
    <location>
        <position position="219"/>
    </location>
</feature>
<feature type="mutagenesis site" description="In T6; induces dorsalized embryos." evidence="6">
    <original>L</original>
    <variation>P</variation>
    <location>
        <position position="239"/>
    </location>
</feature>
<feature type="strand" evidence="10">
    <location>
        <begin position="28"/>
        <end position="30"/>
    </location>
</feature>
<feature type="turn" evidence="11">
    <location>
        <begin position="32"/>
        <end position="34"/>
    </location>
</feature>
<feature type="helix" evidence="11">
    <location>
        <begin position="35"/>
        <end position="39"/>
    </location>
</feature>
<feature type="strand" evidence="11">
    <location>
        <begin position="42"/>
        <end position="53"/>
    </location>
</feature>
<feature type="helix" evidence="11">
    <location>
        <begin position="57"/>
        <end position="72"/>
    </location>
</feature>
<feature type="strand" evidence="11">
    <location>
        <begin position="74"/>
        <end position="83"/>
    </location>
</feature>
<feature type="strand" evidence="10">
    <location>
        <begin position="86"/>
        <end position="88"/>
    </location>
</feature>
<feature type="helix" evidence="11">
    <location>
        <begin position="92"/>
        <end position="97"/>
    </location>
</feature>
<feature type="helix" evidence="10">
    <location>
        <begin position="102"/>
        <end position="104"/>
    </location>
</feature>
<feature type="strand" evidence="11">
    <location>
        <begin position="107"/>
        <end position="120"/>
    </location>
</feature>
<feature type="helix" evidence="11">
    <location>
        <begin position="129"/>
        <end position="139"/>
    </location>
</feature>
<feature type="helix" evidence="11">
    <location>
        <begin position="151"/>
        <end position="157"/>
    </location>
</feature>
<feature type="helix" evidence="11">
    <location>
        <begin position="160"/>
        <end position="162"/>
    </location>
</feature>
<feature type="helix" evidence="11">
    <location>
        <begin position="165"/>
        <end position="181"/>
    </location>
</feature>
<feature type="helix" evidence="11">
    <location>
        <begin position="185"/>
        <end position="204"/>
    </location>
</feature>
<feature type="helix" evidence="11">
    <location>
        <begin position="207"/>
        <end position="220"/>
    </location>
</feature>
<feature type="helix" evidence="11">
    <location>
        <begin position="226"/>
        <end position="241"/>
    </location>
</feature>
<sequence>MMHILVTLLLVAIHSIPTTWAVTCTGCVDLDELSFEKTVERFPYSVVKFDIAYPYGEKHEAFTAFSKSAHKATKDLLIATVGVKDYGELENKALGDRYKVDDKNFPSIFLFKGNADEYVQLPSHVDVTLDNLKAFVSANTPLYIGRDGCIKEFNEVLKNYANIPDAEQLKLIEKLQAKQEQLTDPEQQQNARAYLIYMRKIHEVGYDFLEEETKRLLRLKAGKVTEAKKEELLRKLNILEVFRVHKVTKTAPEKEEL</sequence>
<keyword id="KW-0002">3D-structure</keyword>
<keyword id="KW-0143">Chaperone</keyword>
<keyword id="KW-0217">Developmental protein</keyword>
<keyword id="KW-0256">Endoplasmic reticulum</keyword>
<keyword id="KW-1185">Reference proteome</keyword>
<keyword id="KW-0732">Signal</keyword>
<evidence type="ECO:0000255" key="1"/>
<evidence type="ECO:0000255" key="2">
    <source>
        <dbReference type="PROSITE-ProRule" id="PRU10138"/>
    </source>
</evidence>
<evidence type="ECO:0000269" key="3">
    <source>
    </source>
</evidence>
<evidence type="ECO:0000269" key="4">
    <source>
    </source>
</evidence>
<evidence type="ECO:0000269" key="5">
    <source>
    </source>
</evidence>
<evidence type="ECO:0000269" key="6">
    <source>
    </source>
</evidence>
<evidence type="ECO:0000269" key="7">
    <source>
    </source>
</evidence>
<evidence type="ECO:0000312" key="8">
    <source>
        <dbReference type="FlyBase" id="FBgn0004003"/>
    </source>
</evidence>
<evidence type="ECO:0000312" key="9">
    <source>
        <dbReference type="Proteomes" id="UP000000803"/>
    </source>
</evidence>
<evidence type="ECO:0007829" key="10">
    <source>
        <dbReference type="PDB" id="1OVN"/>
    </source>
</evidence>
<evidence type="ECO:0007829" key="11">
    <source>
        <dbReference type="PDB" id="2C0G"/>
    </source>
</evidence>
<accession>O44342</accession>
<accession>Q4V3T7</accession>
<organism evidence="9">
    <name type="scientific">Drosophila melanogaster</name>
    <name type="common">Fruit fly</name>
    <dbReference type="NCBI Taxonomy" id="7227"/>
    <lineage>
        <taxon>Eukaryota</taxon>
        <taxon>Metazoa</taxon>
        <taxon>Ecdysozoa</taxon>
        <taxon>Arthropoda</taxon>
        <taxon>Hexapoda</taxon>
        <taxon>Insecta</taxon>
        <taxon>Pterygota</taxon>
        <taxon>Neoptera</taxon>
        <taxon>Endopterygota</taxon>
        <taxon>Diptera</taxon>
        <taxon>Brachycera</taxon>
        <taxon>Muscomorpha</taxon>
        <taxon>Ephydroidea</taxon>
        <taxon>Drosophilidae</taxon>
        <taxon>Drosophila</taxon>
        <taxon>Sophophora</taxon>
    </lineage>
</organism>
<reference key="1">
    <citation type="journal article" date="1998" name="Genes Dev.">
        <title>windbeutel, a gene required for dorsoventral patterning in Drosophila, encodes a protein that has homologies to vertebrate proteins of the endoplasmic reticulum.</title>
        <authorList>
            <person name="Konsolaki M."/>
            <person name="Schuepbach T."/>
        </authorList>
    </citation>
    <scope>NUCLEOTIDE SEQUENCE [GENOMIC DNA]</scope>
    <scope>TISSUE SPECIFICITY</scope>
    <scope>DEVELOPMENTAL STAGE</scope>
    <scope>MUTAGENESIS OF LEU-239</scope>
</reference>
<reference key="2">
    <citation type="journal article" date="2000" name="Science">
        <title>The genome sequence of Drosophila melanogaster.</title>
        <authorList>
            <person name="Adams M.D."/>
            <person name="Celniker S.E."/>
            <person name="Holt R.A."/>
            <person name="Evans C.A."/>
            <person name="Gocayne J.D."/>
            <person name="Amanatides P.G."/>
            <person name="Scherer S.E."/>
            <person name="Li P.W."/>
            <person name="Hoskins R.A."/>
            <person name="Galle R.F."/>
            <person name="George R.A."/>
            <person name="Lewis S.E."/>
            <person name="Richards S."/>
            <person name="Ashburner M."/>
            <person name="Henderson S.N."/>
            <person name="Sutton G.G."/>
            <person name="Wortman J.R."/>
            <person name="Yandell M.D."/>
            <person name="Zhang Q."/>
            <person name="Chen L.X."/>
            <person name="Brandon R.C."/>
            <person name="Rogers Y.-H.C."/>
            <person name="Blazej R.G."/>
            <person name="Champe M."/>
            <person name="Pfeiffer B.D."/>
            <person name="Wan K.H."/>
            <person name="Doyle C."/>
            <person name="Baxter E.G."/>
            <person name="Helt G."/>
            <person name="Nelson C.R."/>
            <person name="Miklos G.L.G."/>
            <person name="Abril J.F."/>
            <person name="Agbayani A."/>
            <person name="An H.-J."/>
            <person name="Andrews-Pfannkoch C."/>
            <person name="Baldwin D."/>
            <person name="Ballew R.M."/>
            <person name="Basu A."/>
            <person name="Baxendale J."/>
            <person name="Bayraktaroglu L."/>
            <person name="Beasley E.M."/>
            <person name="Beeson K.Y."/>
            <person name="Benos P.V."/>
            <person name="Berman B.P."/>
            <person name="Bhandari D."/>
            <person name="Bolshakov S."/>
            <person name="Borkova D."/>
            <person name="Botchan M.R."/>
            <person name="Bouck J."/>
            <person name="Brokstein P."/>
            <person name="Brottier P."/>
            <person name="Burtis K.C."/>
            <person name="Busam D.A."/>
            <person name="Butler H."/>
            <person name="Cadieu E."/>
            <person name="Center A."/>
            <person name="Chandra I."/>
            <person name="Cherry J.M."/>
            <person name="Cawley S."/>
            <person name="Dahlke C."/>
            <person name="Davenport L.B."/>
            <person name="Davies P."/>
            <person name="de Pablos B."/>
            <person name="Delcher A."/>
            <person name="Deng Z."/>
            <person name="Mays A.D."/>
            <person name="Dew I."/>
            <person name="Dietz S.M."/>
            <person name="Dodson K."/>
            <person name="Doup L.E."/>
            <person name="Downes M."/>
            <person name="Dugan-Rocha S."/>
            <person name="Dunkov B.C."/>
            <person name="Dunn P."/>
            <person name="Durbin K.J."/>
            <person name="Evangelista C.C."/>
            <person name="Ferraz C."/>
            <person name="Ferriera S."/>
            <person name="Fleischmann W."/>
            <person name="Fosler C."/>
            <person name="Gabrielian A.E."/>
            <person name="Garg N.S."/>
            <person name="Gelbart W.M."/>
            <person name="Glasser K."/>
            <person name="Glodek A."/>
            <person name="Gong F."/>
            <person name="Gorrell J.H."/>
            <person name="Gu Z."/>
            <person name="Guan P."/>
            <person name="Harris M."/>
            <person name="Harris N.L."/>
            <person name="Harvey D.A."/>
            <person name="Heiman T.J."/>
            <person name="Hernandez J.R."/>
            <person name="Houck J."/>
            <person name="Hostin D."/>
            <person name="Houston K.A."/>
            <person name="Howland T.J."/>
            <person name="Wei M.-H."/>
            <person name="Ibegwam C."/>
            <person name="Jalali M."/>
            <person name="Kalush F."/>
            <person name="Karpen G.H."/>
            <person name="Ke Z."/>
            <person name="Kennison J.A."/>
            <person name="Ketchum K.A."/>
            <person name="Kimmel B.E."/>
            <person name="Kodira C.D."/>
            <person name="Kraft C.L."/>
            <person name="Kravitz S."/>
            <person name="Kulp D."/>
            <person name="Lai Z."/>
            <person name="Lasko P."/>
            <person name="Lei Y."/>
            <person name="Levitsky A.A."/>
            <person name="Li J.H."/>
            <person name="Li Z."/>
            <person name="Liang Y."/>
            <person name="Lin X."/>
            <person name="Liu X."/>
            <person name="Mattei B."/>
            <person name="McIntosh T.C."/>
            <person name="McLeod M.P."/>
            <person name="McPherson D."/>
            <person name="Merkulov G."/>
            <person name="Milshina N.V."/>
            <person name="Mobarry C."/>
            <person name="Morris J."/>
            <person name="Moshrefi A."/>
            <person name="Mount S.M."/>
            <person name="Moy M."/>
            <person name="Murphy B."/>
            <person name="Murphy L."/>
            <person name="Muzny D.M."/>
            <person name="Nelson D.L."/>
            <person name="Nelson D.R."/>
            <person name="Nelson K.A."/>
            <person name="Nixon K."/>
            <person name="Nusskern D.R."/>
            <person name="Pacleb J.M."/>
            <person name="Palazzolo M."/>
            <person name="Pittman G.S."/>
            <person name="Pan S."/>
            <person name="Pollard J."/>
            <person name="Puri V."/>
            <person name="Reese M.G."/>
            <person name="Reinert K."/>
            <person name="Remington K."/>
            <person name="Saunders R.D.C."/>
            <person name="Scheeler F."/>
            <person name="Shen H."/>
            <person name="Shue B.C."/>
            <person name="Siden-Kiamos I."/>
            <person name="Simpson M."/>
            <person name="Skupski M.P."/>
            <person name="Smith T.J."/>
            <person name="Spier E."/>
            <person name="Spradling A.C."/>
            <person name="Stapleton M."/>
            <person name="Strong R."/>
            <person name="Sun E."/>
            <person name="Svirskas R."/>
            <person name="Tector C."/>
            <person name="Turner R."/>
            <person name="Venter E."/>
            <person name="Wang A.H."/>
            <person name="Wang X."/>
            <person name="Wang Z.-Y."/>
            <person name="Wassarman D.A."/>
            <person name="Weinstock G.M."/>
            <person name="Weissenbach J."/>
            <person name="Williams S.M."/>
            <person name="Woodage T."/>
            <person name="Worley K.C."/>
            <person name="Wu D."/>
            <person name="Yang S."/>
            <person name="Yao Q.A."/>
            <person name="Ye J."/>
            <person name="Yeh R.-F."/>
            <person name="Zaveri J.S."/>
            <person name="Zhan M."/>
            <person name="Zhang G."/>
            <person name="Zhao Q."/>
            <person name="Zheng L."/>
            <person name="Zheng X.H."/>
            <person name="Zhong F.N."/>
            <person name="Zhong W."/>
            <person name="Zhou X."/>
            <person name="Zhu S.C."/>
            <person name="Zhu X."/>
            <person name="Smith H.O."/>
            <person name="Gibbs R.A."/>
            <person name="Myers E.W."/>
            <person name="Rubin G.M."/>
            <person name="Venter J.C."/>
        </authorList>
    </citation>
    <scope>NUCLEOTIDE SEQUENCE [LARGE SCALE GENOMIC DNA]</scope>
    <source>
        <strain>Berkeley</strain>
    </source>
</reference>
<reference key="3">
    <citation type="journal article" date="2002" name="Genome Biol.">
        <title>Annotation of the Drosophila melanogaster euchromatic genome: a systematic review.</title>
        <authorList>
            <person name="Misra S."/>
            <person name="Crosby M.A."/>
            <person name="Mungall C.J."/>
            <person name="Matthews B.B."/>
            <person name="Campbell K.S."/>
            <person name="Hradecky P."/>
            <person name="Huang Y."/>
            <person name="Kaminker J.S."/>
            <person name="Millburn G.H."/>
            <person name="Prochnik S.E."/>
            <person name="Smith C.D."/>
            <person name="Tupy J.L."/>
            <person name="Whitfield E.J."/>
            <person name="Bayraktaroglu L."/>
            <person name="Berman B.P."/>
            <person name="Bettencourt B.R."/>
            <person name="Celniker S.E."/>
            <person name="de Grey A.D.N.J."/>
            <person name="Drysdale R.A."/>
            <person name="Harris N.L."/>
            <person name="Richter J."/>
            <person name="Russo S."/>
            <person name="Schroeder A.J."/>
            <person name="Shu S.Q."/>
            <person name="Stapleton M."/>
            <person name="Yamada C."/>
            <person name="Ashburner M."/>
            <person name="Gelbart W.M."/>
            <person name="Rubin G.M."/>
            <person name="Lewis S.E."/>
        </authorList>
    </citation>
    <scope>GENOME REANNOTATION</scope>
    <source>
        <strain>Berkeley</strain>
    </source>
</reference>
<reference key="4">
    <citation type="submission" date="2005-05" db="EMBL/GenBank/DDBJ databases">
        <authorList>
            <person name="Stapleton M."/>
            <person name="Carlson J.W."/>
            <person name="Chavez C."/>
            <person name="Frise E."/>
            <person name="George R.A."/>
            <person name="Pacleb J.M."/>
            <person name="Park S."/>
            <person name="Wan K.H."/>
            <person name="Yu C."/>
            <person name="Celniker S.E."/>
        </authorList>
    </citation>
    <scope>NUCLEOTIDE SEQUENCE [LARGE SCALE MRNA]</scope>
    <source>
        <strain>Berkeley</strain>
    </source>
</reference>
<reference key="5">
    <citation type="journal article" date="1998" name="Cell">
        <title>Localized requirements for windbeutel and pipe reveal a dorsoventral prepattern within the follicular epithelium of the Drosophila ovary.</title>
        <authorList>
            <person name="Nilson L.A."/>
            <person name="Schuepbach T."/>
        </authorList>
    </citation>
    <scope>FUNCTION</scope>
</reference>
<reference key="6">
    <citation type="journal article" date="2000" name="Development">
        <title>Windbeutel is required for function and correct subcellular localization of the Drosophila patterning protein Pipe.</title>
        <authorList>
            <person name="Sen J."/>
            <person name="Goltz J.S."/>
            <person name="Konsolaki M."/>
            <person name="Schuepbach T."/>
            <person name="Stein D."/>
        </authorList>
    </citation>
    <scope>FUNCTION</scope>
    <scope>SUBCELLULAR LOCATION</scope>
</reference>
<reference key="7">
    <citation type="journal article" date="2004" name="J. Biol. Chem.">
        <title>Mapping of a substrate binding site in the protein disulfide isomerase-related chaperone wind based on protein function and crystal structure.</title>
        <authorList>
            <person name="Barnewitz K."/>
            <person name="Guo C."/>
            <person name="Sevvana M."/>
            <person name="Ma Q."/>
            <person name="Sheldrick G.M."/>
            <person name="Soeling H.-D."/>
            <person name="Ferrari D.M."/>
        </authorList>
    </citation>
    <scope>INTERACTION WITH PIP</scope>
    <scope>MUTAGENESIS OF THR-25; VAL-28; ASP-29; ARG-41; ASP-50; ILE-51; ALA-52; TYR-53; LYS-58; HIS-59; GLU-60; THR-63; LYS-84; TYR-86; GLU-88; PRO-106; GLU-212; ARG-215; ARG-218 AND LEU-219</scope>
</reference>
<reference key="8">
    <citation type="journal article" date="2003" name="J. Biol. Chem.">
        <title>Crystal structure and functional analysis of Drosophila Wind, a protein-disulfide isomerase-related protein.</title>
        <authorList>
            <person name="Ma Q."/>
            <person name="Guo C."/>
            <person name="Barnewitz K."/>
            <person name="Sheldrick G.M."/>
            <person name="Soeling H.-D."/>
            <person name="Uson I."/>
            <person name="Ferrari D.M."/>
        </authorList>
    </citation>
    <scope>X-RAY CRYSTALLOGRAPHY (1.9 ANGSTROMS) OF 10-257</scope>
    <scope>SUBUNIT</scope>
    <scope>MUTAGENESIS OF 24-LYS--LEU-27; ASP-31 AND TYR-55</scope>
</reference>
<name>WBL_DROME</name>
<protein>
    <recommendedName>
        <fullName evidence="8">Protein windbeutel</fullName>
    </recommendedName>
    <alternativeName>
        <fullName>Erp29 homolog</fullName>
    </alternativeName>
</protein>